<keyword id="KW-0134">Cell wall</keyword>
<keyword id="KW-1185">Reference proteome</keyword>
<keyword id="KW-0964">Secreted</keyword>
<proteinExistence type="inferred from homology"/>
<gene>
    <name evidence="4" type="primary">PE_PGRS8</name>
    <name evidence="4" type="ordered locus">Rv0742</name>
</gene>
<sequence>MSFVIAAPEAIAAAATDLASIGSTIGAANAAAAANTTAVLAAGADQVSVAIAAAFGAHGQAYQALSAQAATFHIQFVQALTAGAGSYAAAEAASAASITSPLLDAINAPFLAALGRPLIGNGADGAPGTGAAGGAGGLLFGNGGAGGSGAPGGAGGLLFGNGGAGGPGASGGALG</sequence>
<organism>
    <name type="scientific">Mycobacterium tuberculosis (strain ATCC 25618 / H37Rv)</name>
    <dbReference type="NCBI Taxonomy" id="83332"/>
    <lineage>
        <taxon>Bacteria</taxon>
        <taxon>Bacillati</taxon>
        <taxon>Actinomycetota</taxon>
        <taxon>Actinomycetes</taxon>
        <taxon>Mycobacteriales</taxon>
        <taxon>Mycobacteriaceae</taxon>
        <taxon>Mycobacterium</taxon>
        <taxon>Mycobacterium tuberculosis complex</taxon>
    </lineage>
</organism>
<dbReference type="EMBL" id="AL123456">
    <property type="protein sequence ID" value="CCP43487.1"/>
    <property type="molecule type" value="Genomic_DNA"/>
</dbReference>
<dbReference type="RefSeq" id="WP_003901009.1">
    <property type="nucleotide sequence ID" value="NZ_NVQJ01000007.1"/>
</dbReference>
<dbReference type="RefSeq" id="YP_177749.1">
    <property type="nucleotide sequence ID" value="NC_000962.3"/>
</dbReference>
<dbReference type="SMR" id="I6Y8K5"/>
<dbReference type="STRING" id="83332.Rv0742"/>
<dbReference type="PaxDb" id="83332-Rv0742"/>
<dbReference type="GeneID" id="888645"/>
<dbReference type="KEGG" id="mtu:Rv0742"/>
<dbReference type="KEGG" id="mtv:RVBD_0742"/>
<dbReference type="PATRIC" id="fig|83332.111.peg.821"/>
<dbReference type="TubercuList" id="Rv0742"/>
<dbReference type="eggNOG" id="COG0657">
    <property type="taxonomic scope" value="Bacteria"/>
</dbReference>
<dbReference type="HOGENOM" id="CLU_000167_16_0_11"/>
<dbReference type="InParanoid" id="I6Y8K5"/>
<dbReference type="Proteomes" id="UP000001584">
    <property type="component" value="Chromosome"/>
</dbReference>
<dbReference type="GO" id="GO:0009986">
    <property type="term" value="C:cell surface"/>
    <property type="evidence" value="ECO:0007669"/>
    <property type="project" value="UniProtKB-SubCell"/>
</dbReference>
<dbReference type="GO" id="GO:0005576">
    <property type="term" value="C:extracellular region"/>
    <property type="evidence" value="ECO:0007669"/>
    <property type="project" value="UniProtKB-KW"/>
</dbReference>
<dbReference type="FunFam" id="1.10.287.850:FF:000001">
    <property type="entry name" value="PE_PGRS39"/>
    <property type="match status" value="1"/>
</dbReference>
<dbReference type="Gene3D" id="1.10.287.850">
    <property type="entry name" value="HP0062-like domain"/>
    <property type="match status" value="1"/>
</dbReference>
<dbReference type="InterPro" id="IPR000084">
    <property type="entry name" value="PE-PGRS_N"/>
</dbReference>
<dbReference type="Pfam" id="PF00934">
    <property type="entry name" value="PE"/>
    <property type="match status" value="1"/>
</dbReference>
<dbReference type="SUPFAM" id="SSF140459">
    <property type="entry name" value="PE/PPE dimer-like"/>
    <property type="match status" value="1"/>
</dbReference>
<reference key="1">
    <citation type="journal article" date="1998" name="Nature">
        <title>Deciphering the biology of Mycobacterium tuberculosis from the complete genome sequence.</title>
        <authorList>
            <person name="Cole S.T."/>
            <person name="Brosch R."/>
            <person name="Parkhill J."/>
            <person name="Garnier T."/>
            <person name="Churcher C.M."/>
            <person name="Harris D.E."/>
            <person name="Gordon S.V."/>
            <person name="Eiglmeier K."/>
            <person name="Gas S."/>
            <person name="Barry C.E. III"/>
            <person name="Tekaia F."/>
            <person name="Badcock K."/>
            <person name="Basham D."/>
            <person name="Brown D."/>
            <person name="Chillingworth T."/>
            <person name="Connor R."/>
            <person name="Davies R.M."/>
            <person name="Devlin K."/>
            <person name="Feltwell T."/>
            <person name="Gentles S."/>
            <person name="Hamlin N."/>
            <person name="Holroyd S."/>
            <person name="Hornsby T."/>
            <person name="Jagels K."/>
            <person name="Krogh A."/>
            <person name="McLean J."/>
            <person name="Moule S."/>
            <person name="Murphy L.D."/>
            <person name="Oliver S."/>
            <person name="Osborne J."/>
            <person name="Quail M.A."/>
            <person name="Rajandream M.A."/>
            <person name="Rogers J."/>
            <person name="Rutter S."/>
            <person name="Seeger K."/>
            <person name="Skelton S."/>
            <person name="Squares S."/>
            <person name="Squares R."/>
            <person name="Sulston J.E."/>
            <person name="Taylor K."/>
            <person name="Whitehead S."/>
            <person name="Barrell B.G."/>
        </authorList>
    </citation>
    <scope>NUCLEOTIDE SEQUENCE [LARGE SCALE GENOMIC DNA]</scope>
    <source>
        <strain>ATCC 25618 / H37Rv</strain>
    </source>
</reference>
<reference key="2">
    <citation type="journal article" date="2016" name="Biochemistry">
        <title>The PE_PGRS proteins of Mycobacterium tuberculosis are Ca(2+) binding mediators of host-pathogen interaction.</title>
        <authorList>
            <person name="Yeruva V.C."/>
            <person name="Kulkarni A."/>
            <person name="Khandelwal R."/>
            <person name="Sharma Y."/>
            <person name="Raghunand T.R."/>
        </authorList>
    </citation>
    <scope>SUBCELLULAR LOCATION</scope>
</reference>
<accession>I6Y8K5</accession>
<evidence type="ECO:0000255" key="1"/>
<evidence type="ECO:0000269" key="2">
    <source>
    </source>
</evidence>
<evidence type="ECO:0000305" key="3"/>
<evidence type="ECO:0000312" key="4">
    <source>
        <dbReference type="EMBL" id="CCP43487.1"/>
    </source>
</evidence>
<comment type="subcellular location">
    <subcellularLocation>
        <location evidence="2">Secreted</location>
        <location evidence="2">Cell wall</location>
    </subcellularLocation>
    <subcellularLocation>
        <location evidence="2">Cell surface</location>
    </subcellularLocation>
</comment>
<comment type="similarity">
    <text evidence="3">Belongs to the mycobacterial PE family. PGRS subfamily.</text>
</comment>
<name>PG08_MYCTU</name>
<feature type="chain" id="PRO_5008166656" description="PE-PGRS family protein PE_PGRS8">
    <location>
        <begin position="1"/>
        <end position="175"/>
    </location>
</feature>
<feature type="domain" description="PE" evidence="1">
    <location>
        <begin position="1"/>
        <end position="93"/>
    </location>
</feature>
<protein>
    <recommendedName>
        <fullName evidence="3">PE-PGRS family protein PE_PGRS8</fullName>
    </recommendedName>
</protein>